<name>DNLI1_RAT</name>
<comment type="function">
    <text evidence="3">DNA ligase that seals nicks in double-stranded during DNA repair. Also involved in DNA replication and DNA recombination.</text>
</comment>
<comment type="catalytic activity">
    <reaction>
        <text>ATP + (deoxyribonucleotide)n-3'-hydroxyl + 5'-phospho-(deoxyribonucleotide)m = (deoxyribonucleotide)n+m + AMP + diphosphate.</text>
        <dbReference type="EC" id="6.5.1.1"/>
    </reaction>
</comment>
<comment type="cofactor">
    <cofactor evidence="1">
        <name>Mg(2+)</name>
        <dbReference type="ChEBI" id="CHEBI:18420"/>
    </cofactor>
</comment>
<comment type="subunit">
    <text evidence="2">Interacts with PCNA. Interacts with POLB.</text>
</comment>
<comment type="subcellular location">
    <subcellularLocation>
        <location>Nucleus</location>
    </subcellularLocation>
</comment>
<comment type="similarity">
    <text evidence="6">Belongs to the ATP-dependent DNA ligase family.</text>
</comment>
<reference key="1">
    <citation type="submission" date="2000-06" db="EMBL/GenBank/DDBJ databases">
        <title>Molecular cloning and characterization of rat DNA ligase I.</title>
        <authorList>
            <person name="Chen D."/>
            <person name="Cao G."/>
            <person name="Chen J."/>
        </authorList>
    </citation>
    <scope>NUCLEOTIDE SEQUENCE [MRNA]</scope>
    <source>
        <strain>Sprague-Dawley</strain>
    </source>
</reference>
<reference key="2">
    <citation type="journal article" date="2012" name="Nat. Commun.">
        <title>Quantitative maps of protein phosphorylation sites across 14 different rat organs and tissues.</title>
        <authorList>
            <person name="Lundby A."/>
            <person name="Secher A."/>
            <person name="Lage K."/>
            <person name="Nordsborg N.B."/>
            <person name="Dmytriyev A."/>
            <person name="Lundby C."/>
            <person name="Olsen J.V."/>
        </authorList>
    </citation>
    <scope>PHOSPHORYLATION [LARGE SCALE ANALYSIS] AT SER-66; SER-67 AND THR-78</scope>
    <scope>IDENTIFICATION BY MASS SPECTROMETRY [LARGE SCALE ANALYSIS]</scope>
</reference>
<dbReference type="EC" id="6.5.1.1"/>
<dbReference type="EMBL" id="AF276774">
    <property type="protein sequence ID" value="AAF82585.1"/>
    <property type="molecule type" value="mRNA"/>
</dbReference>
<dbReference type="SMR" id="Q9JHY8"/>
<dbReference type="FunCoup" id="Q9JHY8">
    <property type="interactions" value="1920"/>
</dbReference>
<dbReference type="STRING" id="10116.ENSRNOP00000019799"/>
<dbReference type="GlyGen" id="Q9JHY8">
    <property type="glycosylation" value="1 site"/>
</dbReference>
<dbReference type="iPTMnet" id="Q9JHY8"/>
<dbReference type="PhosphoSitePlus" id="Q9JHY8"/>
<dbReference type="jPOST" id="Q9JHY8"/>
<dbReference type="PaxDb" id="10116-ENSRNOP00000019799"/>
<dbReference type="UCSC" id="RGD:621424">
    <property type="organism name" value="rat"/>
</dbReference>
<dbReference type="AGR" id="RGD:621424"/>
<dbReference type="RGD" id="621424">
    <property type="gene designation" value="Lig1"/>
</dbReference>
<dbReference type="eggNOG" id="KOG0967">
    <property type="taxonomic scope" value="Eukaryota"/>
</dbReference>
<dbReference type="InParanoid" id="Q9JHY8"/>
<dbReference type="PhylomeDB" id="Q9JHY8"/>
<dbReference type="Reactome" id="R-RNO-110362">
    <property type="pathway name" value="POLB-Dependent Long Patch Base Excision Repair"/>
</dbReference>
<dbReference type="Reactome" id="R-RNO-174414">
    <property type="pathway name" value="Processive synthesis on the C-strand of the telomere"/>
</dbReference>
<dbReference type="Reactome" id="R-RNO-5358565">
    <property type="pathway name" value="Mismatch repair (MMR) directed by MSH2:MSH6 (MutSalpha)"/>
</dbReference>
<dbReference type="Reactome" id="R-RNO-5358606">
    <property type="pathway name" value="Mismatch repair (MMR) directed by MSH2:MSH3 (MutSbeta)"/>
</dbReference>
<dbReference type="Reactome" id="R-RNO-5651801">
    <property type="pathway name" value="PCNA-Dependent Long Patch Base Excision Repair"/>
</dbReference>
<dbReference type="Reactome" id="R-RNO-6782210">
    <property type="pathway name" value="Gap-filling DNA repair synthesis and ligation in TC-NER"/>
</dbReference>
<dbReference type="Reactome" id="R-RNO-69183">
    <property type="pathway name" value="Processive synthesis on the lagging strand"/>
</dbReference>
<dbReference type="PRO" id="PR:Q9JHY8"/>
<dbReference type="Proteomes" id="UP000002494">
    <property type="component" value="Unplaced"/>
</dbReference>
<dbReference type="GO" id="GO:0005634">
    <property type="term" value="C:nucleus"/>
    <property type="evidence" value="ECO:0000266"/>
    <property type="project" value="RGD"/>
</dbReference>
<dbReference type="GO" id="GO:0005524">
    <property type="term" value="F:ATP binding"/>
    <property type="evidence" value="ECO:0007669"/>
    <property type="project" value="UniProtKB-KW"/>
</dbReference>
<dbReference type="GO" id="GO:0003677">
    <property type="term" value="F:DNA binding"/>
    <property type="evidence" value="ECO:0007669"/>
    <property type="project" value="InterPro"/>
</dbReference>
<dbReference type="GO" id="GO:0003910">
    <property type="term" value="F:DNA ligase (ATP) activity"/>
    <property type="evidence" value="ECO:0000318"/>
    <property type="project" value="GO_Central"/>
</dbReference>
<dbReference type="GO" id="GO:0003909">
    <property type="term" value="F:DNA ligase activity"/>
    <property type="evidence" value="ECO:0000314"/>
    <property type="project" value="RGD"/>
</dbReference>
<dbReference type="GO" id="GO:0046872">
    <property type="term" value="F:metal ion binding"/>
    <property type="evidence" value="ECO:0007669"/>
    <property type="project" value="UniProtKB-KW"/>
</dbReference>
<dbReference type="GO" id="GO:0006284">
    <property type="term" value="P:base-excision repair"/>
    <property type="evidence" value="ECO:0000266"/>
    <property type="project" value="RGD"/>
</dbReference>
<dbReference type="GO" id="GO:0051301">
    <property type="term" value="P:cell division"/>
    <property type="evidence" value="ECO:0007669"/>
    <property type="project" value="UniProtKB-KW"/>
</dbReference>
<dbReference type="GO" id="GO:0071897">
    <property type="term" value="P:DNA biosynthetic process"/>
    <property type="evidence" value="ECO:0007669"/>
    <property type="project" value="InterPro"/>
</dbReference>
<dbReference type="GO" id="GO:0006310">
    <property type="term" value="P:DNA recombination"/>
    <property type="evidence" value="ECO:0007669"/>
    <property type="project" value="UniProtKB-KW"/>
</dbReference>
<dbReference type="GO" id="GO:0006281">
    <property type="term" value="P:DNA repair"/>
    <property type="evidence" value="ECO:0000314"/>
    <property type="project" value="RGD"/>
</dbReference>
<dbReference type="GO" id="GO:0006260">
    <property type="term" value="P:DNA replication"/>
    <property type="evidence" value="ECO:0000266"/>
    <property type="project" value="RGD"/>
</dbReference>
<dbReference type="GO" id="GO:0006303">
    <property type="term" value="P:double-strand break repair via nonhomologous end joining"/>
    <property type="evidence" value="ECO:0000266"/>
    <property type="project" value="RGD"/>
</dbReference>
<dbReference type="GO" id="GO:0006273">
    <property type="term" value="P:lagging strand elongation"/>
    <property type="evidence" value="ECO:0000318"/>
    <property type="project" value="GO_Central"/>
</dbReference>
<dbReference type="GO" id="GO:1903461">
    <property type="term" value="P:Okazaki fragment processing involved in mitotic DNA replication"/>
    <property type="evidence" value="ECO:0000318"/>
    <property type="project" value="GO_Central"/>
</dbReference>
<dbReference type="GO" id="GO:0042542">
    <property type="term" value="P:response to hydrogen peroxide"/>
    <property type="evidence" value="ECO:0000266"/>
    <property type="project" value="RGD"/>
</dbReference>
<dbReference type="CDD" id="cd07900">
    <property type="entry name" value="Adenylation_DNA_ligase_I_Euk"/>
    <property type="match status" value="1"/>
</dbReference>
<dbReference type="CDD" id="cd07969">
    <property type="entry name" value="OBF_DNA_ligase_I"/>
    <property type="match status" value="1"/>
</dbReference>
<dbReference type="FunFam" id="1.10.3260.10:FF:000001">
    <property type="entry name" value="DNA ligase"/>
    <property type="match status" value="1"/>
</dbReference>
<dbReference type="FunFam" id="2.40.50.140:FF:000062">
    <property type="entry name" value="DNA ligase"/>
    <property type="match status" value="1"/>
</dbReference>
<dbReference type="FunFam" id="3.30.470.30:FF:000016">
    <property type="entry name" value="DNA ligase"/>
    <property type="match status" value="1"/>
</dbReference>
<dbReference type="Gene3D" id="3.30.1490.70">
    <property type="match status" value="1"/>
</dbReference>
<dbReference type="Gene3D" id="1.10.3260.10">
    <property type="entry name" value="DNA ligase, ATP-dependent, N-terminal domain"/>
    <property type="match status" value="1"/>
</dbReference>
<dbReference type="Gene3D" id="3.30.470.30">
    <property type="entry name" value="DNA ligase/mRNA capping enzyme"/>
    <property type="match status" value="1"/>
</dbReference>
<dbReference type="Gene3D" id="2.40.50.140">
    <property type="entry name" value="Nucleic acid-binding proteins"/>
    <property type="match status" value="1"/>
</dbReference>
<dbReference type="InterPro" id="IPR050191">
    <property type="entry name" value="ATP-dep_DNA_ligase"/>
</dbReference>
<dbReference type="InterPro" id="IPR000977">
    <property type="entry name" value="DNA_ligase_ATP-dep"/>
</dbReference>
<dbReference type="InterPro" id="IPR012309">
    <property type="entry name" value="DNA_ligase_ATP-dep_C"/>
</dbReference>
<dbReference type="InterPro" id="IPR012310">
    <property type="entry name" value="DNA_ligase_ATP-dep_cent"/>
</dbReference>
<dbReference type="InterPro" id="IPR016059">
    <property type="entry name" value="DNA_ligase_ATP-dep_CS"/>
</dbReference>
<dbReference type="InterPro" id="IPR012308">
    <property type="entry name" value="DNA_ligase_ATP-dep_N"/>
</dbReference>
<dbReference type="InterPro" id="IPR036599">
    <property type="entry name" value="DNA_ligase_N_sf"/>
</dbReference>
<dbReference type="InterPro" id="IPR012340">
    <property type="entry name" value="NA-bd_OB-fold"/>
</dbReference>
<dbReference type="NCBIfam" id="TIGR00574">
    <property type="entry name" value="dnl1"/>
    <property type="match status" value="1"/>
</dbReference>
<dbReference type="PANTHER" id="PTHR45674:SF4">
    <property type="entry name" value="DNA LIGASE 1"/>
    <property type="match status" value="1"/>
</dbReference>
<dbReference type="PANTHER" id="PTHR45674">
    <property type="entry name" value="DNA LIGASE 1/3 FAMILY MEMBER"/>
    <property type="match status" value="1"/>
</dbReference>
<dbReference type="Pfam" id="PF04679">
    <property type="entry name" value="DNA_ligase_A_C"/>
    <property type="match status" value="1"/>
</dbReference>
<dbReference type="Pfam" id="PF01068">
    <property type="entry name" value="DNA_ligase_A_M"/>
    <property type="match status" value="1"/>
</dbReference>
<dbReference type="Pfam" id="PF04675">
    <property type="entry name" value="DNA_ligase_A_N"/>
    <property type="match status" value="1"/>
</dbReference>
<dbReference type="SUPFAM" id="SSF117018">
    <property type="entry name" value="ATP-dependent DNA ligase DNA-binding domain"/>
    <property type="match status" value="1"/>
</dbReference>
<dbReference type="SUPFAM" id="SSF56091">
    <property type="entry name" value="DNA ligase/mRNA capping enzyme, catalytic domain"/>
    <property type="match status" value="1"/>
</dbReference>
<dbReference type="SUPFAM" id="SSF50249">
    <property type="entry name" value="Nucleic acid-binding proteins"/>
    <property type="match status" value="1"/>
</dbReference>
<dbReference type="PROSITE" id="PS00333">
    <property type="entry name" value="DNA_LIGASE_A2"/>
    <property type="match status" value="1"/>
</dbReference>
<dbReference type="PROSITE" id="PS50160">
    <property type="entry name" value="DNA_LIGASE_A3"/>
    <property type="match status" value="1"/>
</dbReference>
<sequence length="918" mass="102482">MQRSIMSFFQPTTTEGKAKKPEKEIPSSIREKEPPPKVALKERNRAVPESDSPVKRPGRKVAQVLSSEGEDEDEAPGTPQVQKPVSDSKQSSPPSPDSCPENSPVFNCSPSMDISPSGFPKRRTARKQLPKRTIQDTLEEPNEDKAKAVKKRKKEDPQTPPESLTEAEEVNQKEEQVEDQPTVPPEPTESPESVTLTKTENIPMCKAGVKQKPQEEEQSKPPARGAKPLSSFFTPRKPAVKTEVKQEESDTPRKEETKGAPDPTNYNPSKSNYHPIEDACWKHGQKVPFLAVARTFEKIEEVSARLKMVETLSNLLRSVVALSPTDLLPVLYLSLNRLGPPQQGLELGVGDGVLLKAVAQATGRQLESIRAEVAEKGDVGLVAENSRSTQRLMLPSPPLTVSGVFTKFCDIARLTGSASMAKKMDIIKGLFVACRYSEARFIARSLSGRLRLGLAEQSVLAALAQAGSLTPPGQEFPTVVVDAGKGKTAEARKMWLEEQGMILKQTFCEVPDLDRIIPVLLEHGLESLPEHCKLSPGVPLKPMLAHPTRGVREVLKRFEEVDFTCEYKYYGQRAQIHVLEGGEVKIFSRNQEDNSGKYPDIISRIPKIKHPSVTSFILDTEAVAWDREKKQIQPFQVLTTRKRKEVDASEIQVQVCLYAFDLIYLNGESLARQPLSRRRQLLRENFVETEGEFVFATSLDTKDIEQIAEFLEQSVKDSCEGLMVKTLDVDATYEIAKRSHNWLKLKKDYLEGVGDTLDLVVIGAYLGRGKRPGRYGGFLLAAYDEESEELAAICKLGTGFSDEELEEHHQNMQALLLPTPRPYVRIDGAVAPNHWLDPSIVWEVKCADLTLSPIYRAARGMVDKEKGISLRFPRFIRVREDKQPEQATTSDQVASLYRKQSQIQNQQSSDLDSDVEDY</sequence>
<keyword id="KW-0007">Acetylation</keyword>
<keyword id="KW-0067">ATP-binding</keyword>
<keyword id="KW-0131">Cell cycle</keyword>
<keyword id="KW-0132">Cell division</keyword>
<keyword id="KW-0227">DNA damage</keyword>
<keyword id="KW-0233">DNA recombination</keyword>
<keyword id="KW-0234">DNA repair</keyword>
<keyword id="KW-0235">DNA replication</keyword>
<keyword id="KW-0436">Ligase</keyword>
<keyword id="KW-0460">Magnesium</keyword>
<keyword id="KW-0479">Metal-binding</keyword>
<keyword id="KW-0547">Nucleotide-binding</keyword>
<keyword id="KW-0539">Nucleus</keyword>
<keyword id="KW-0597">Phosphoprotein</keyword>
<keyword id="KW-1185">Reference proteome</keyword>
<organism>
    <name type="scientific">Rattus norvegicus</name>
    <name type="common">Rat</name>
    <dbReference type="NCBI Taxonomy" id="10116"/>
    <lineage>
        <taxon>Eukaryota</taxon>
        <taxon>Metazoa</taxon>
        <taxon>Chordata</taxon>
        <taxon>Craniata</taxon>
        <taxon>Vertebrata</taxon>
        <taxon>Euteleostomi</taxon>
        <taxon>Mammalia</taxon>
        <taxon>Eutheria</taxon>
        <taxon>Euarchontoglires</taxon>
        <taxon>Glires</taxon>
        <taxon>Rodentia</taxon>
        <taxon>Myomorpha</taxon>
        <taxon>Muroidea</taxon>
        <taxon>Muridae</taxon>
        <taxon>Murinae</taxon>
        <taxon>Rattus</taxon>
    </lineage>
</organism>
<feature type="chain" id="PRO_0000059572" description="DNA ligase 1">
    <location>
        <begin position="1"/>
        <end position="918"/>
    </location>
</feature>
<feature type="region of interest" description="Disordered" evidence="5">
    <location>
        <begin position="1"/>
        <end position="271"/>
    </location>
</feature>
<feature type="region of interest" description="Interaction with target DNA" evidence="1">
    <location>
        <begin position="642"/>
        <end position="644"/>
    </location>
</feature>
<feature type="region of interest" description="Disordered" evidence="5">
    <location>
        <begin position="881"/>
        <end position="918"/>
    </location>
</feature>
<feature type="compositionally biased region" description="Polar residues" evidence="5">
    <location>
        <begin position="1"/>
        <end position="15"/>
    </location>
</feature>
<feature type="compositionally biased region" description="Basic and acidic residues" evidence="5">
    <location>
        <begin position="16"/>
        <end position="54"/>
    </location>
</feature>
<feature type="compositionally biased region" description="Low complexity" evidence="5">
    <location>
        <begin position="81"/>
        <end position="92"/>
    </location>
</feature>
<feature type="compositionally biased region" description="Polar residues" evidence="5">
    <location>
        <begin position="100"/>
        <end position="114"/>
    </location>
</feature>
<feature type="compositionally biased region" description="Basic residues" evidence="5">
    <location>
        <begin position="120"/>
        <end position="130"/>
    </location>
</feature>
<feature type="compositionally biased region" description="Basic and acidic residues" evidence="5">
    <location>
        <begin position="240"/>
        <end position="259"/>
    </location>
</feature>
<feature type="compositionally biased region" description="Polar residues" evidence="5">
    <location>
        <begin position="885"/>
        <end position="910"/>
    </location>
</feature>
<feature type="active site" description="N6-AMP-lysine intermediate" evidence="1">
    <location>
        <position position="568"/>
    </location>
</feature>
<feature type="binding site" evidence="3">
    <location>
        <position position="566"/>
    </location>
    <ligand>
        <name>ATP</name>
        <dbReference type="ChEBI" id="CHEBI:30616"/>
    </ligand>
</feature>
<feature type="binding site" evidence="3">
    <location>
        <position position="573"/>
    </location>
    <ligand>
        <name>ATP</name>
        <dbReference type="ChEBI" id="CHEBI:30616"/>
    </ligand>
</feature>
<feature type="binding site" evidence="3">
    <location>
        <position position="621"/>
    </location>
    <ligand>
        <name>ATP</name>
        <dbReference type="ChEBI" id="CHEBI:30616"/>
    </ligand>
</feature>
<feature type="binding site" evidence="1">
    <location>
        <position position="621"/>
    </location>
    <ligand>
        <name>Mg(2+)</name>
        <dbReference type="ChEBI" id="CHEBI:18420"/>
        <label>1</label>
    </ligand>
</feature>
<feature type="binding site" evidence="1">
    <location>
        <position position="720"/>
    </location>
    <ligand>
        <name>Mg(2+)</name>
        <dbReference type="ChEBI" id="CHEBI:18420"/>
        <label>2</label>
    </ligand>
</feature>
<feature type="binding site" evidence="3">
    <location>
        <position position="725"/>
    </location>
    <ligand>
        <name>ATP</name>
        <dbReference type="ChEBI" id="CHEBI:30616"/>
    </ligand>
</feature>
<feature type="binding site" evidence="3">
    <location>
        <position position="744"/>
    </location>
    <ligand>
        <name>ATP</name>
        <dbReference type="ChEBI" id="CHEBI:30616"/>
    </ligand>
</feature>
<feature type="site" description="Interaction with target DNA" evidence="1">
    <location>
        <position position="305"/>
    </location>
</feature>
<feature type="site" description="Interaction with target DNA" evidence="1">
    <location>
        <position position="590"/>
    </location>
</feature>
<feature type="site" description="Interaction with target DNA" evidence="1">
    <location>
        <position position="770"/>
    </location>
</feature>
<feature type="site" description="Interaction with target DNA" evidence="1">
    <location>
        <position position="795"/>
    </location>
</feature>
<feature type="modified residue" description="Phosphoserine" evidence="3">
    <location>
        <position position="50"/>
    </location>
</feature>
<feature type="modified residue" description="Phosphoserine" evidence="3">
    <location>
        <position position="52"/>
    </location>
</feature>
<feature type="modified residue" description="Phosphoserine" evidence="7">
    <location>
        <position position="66"/>
    </location>
</feature>
<feature type="modified residue" description="Phosphoserine" evidence="7">
    <location>
        <position position="67"/>
    </location>
</feature>
<feature type="modified residue" description="Phosphothreonine" evidence="7">
    <location>
        <position position="78"/>
    </location>
</feature>
<feature type="modified residue" description="N6-acetyllysine" evidence="4">
    <location>
        <position position="145"/>
    </location>
</feature>
<feature type="modified residue" description="Phosphothreonine" evidence="3">
    <location>
        <position position="195"/>
    </location>
</feature>
<feature type="modified residue" description="N6-acetyllysine" evidence="4">
    <location>
        <position position="227"/>
    </location>
</feature>
<feature type="modified residue" description="Phosphoserine" evidence="3">
    <location>
        <position position="230"/>
    </location>
</feature>
<feature type="modified residue" description="Phosphoserine" evidence="3">
    <location>
        <position position="231"/>
    </location>
</feature>
<feature type="modified residue" description="Phosphothreonine" evidence="3">
    <location>
        <position position="234"/>
    </location>
</feature>
<feature type="modified residue" description="Phosphothreonine" evidence="3">
    <location>
        <position position="798"/>
    </location>
</feature>
<feature type="modified residue" description="Phosphoserine" evidence="3">
    <location>
        <position position="801"/>
    </location>
</feature>
<feature type="modified residue" description="Phosphoserine" evidence="4">
    <location>
        <position position="908"/>
    </location>
</feature>
<feature type="modified residue" description="Phosphoserine" evidence="4">
    <location>
        <position position="909"/>
    </location>
</feature>
<feature type="modified residue" description="Phosphoserine" evidence="3">
    <location>
        <position position="913"/>
    </location>
</feature>
<evidence type="ECO:0000250" key="1"/>
<evidence type="ECO:0000250" key="2">
    <source>
        <dbReference type="UniProtKB" id="P12004"/>
    </source>
</evidence>
<evidence type="ECO:0000250" key="3">
    <source>
        <dbReference type="UniProtKB" id="P18858"/>
    </source>
</evidence>
<evidence type="ECO:0000250" key="4">
    <source>
        <dbReference type="UniProtKB" id="P37913"/>
    </source>
</evidence>
<evidence type="ECO:0000256" key="5">
    <source>
        <dbReference type="SAM" id="MobiDB-lite"/>
    </source>
</evidence>
<evidence type="ECO:0000305" key="6"/>
<evidence type="ECO:0007744" key="7">
    <source>
    </source>
</evidence>
<protein>
    <recommendedName>
        <fullName>DNA ligase 1</fullName>
        <ecNumber>6.5.1.1</ecNumber>
    </recommendedName>
    <alternativeName>
        <fullName>DNA ligase I</fullName>
    </alternativeName>
    <alternativeName>
        <fullName>Polydeoxyribonucleotide synthase [ATP] 1</fullName>
    </alternativeName>
</protein>
<proteinExistence type="evidence at protein level"/>
<gene>
    <name type="primary">Lig1</name>
</gene>
<accession>Q9JHY8</accession>